<name>RS20_GEMAT</name>
<sequence>MPNIKSAKKDLRRSRAAAVRNRAQRSALRTAVKKARVATAAAADHLTAVSLLDRAARKGLIHRNAAARVKSRLAKQAAASAA</sequence>
<gene>
    <name evidence="1" type="primary">rpsT</name>
    <name type="ordered locus">GAU_1519</name>
</gene>
<proteinExistence type="inferred from homology"/>
<accession>C1A8K1</accession>
<comment type="function">
    <text evidence="1">Binds directly to 16S ribosomal RNA.</text>
</comment>
<comment type="similarity">
    <text evidence="1">Belongs to the bacterial ribosomal protein bS20 family.</text>
</comment>
<feature type="chain" id="PRO_1000206499" description="Small ribosomal subunit protein bS20">
    <location>
        <begin position="1"/>
        <end position="82"/>
    </location>
</feature>
<feature type="region of interest" description="Disordered" evidence="2">
    <location>
        <begin position="1"/>
        <end position="29"/>
    </location>
</feature>
<feature type="compositionally biased region" description="Low complexity" evidence="2">
    <location>
        <begin position="16"/>
        <end position="29"/>
    </location>
</feature>
<keyword id="KW-1185">Reference proteome</keyword>
<keyword id="KW-0687">Ribonucleoprotein</keyword>
<keyword id="KW-0689">Ribosomal protein</keyword>
<keyword id="KW-0694">RNA-binding</keyword>
<keyword id="KW-0699">rRNA-binding</keyword>
<organism>
    <name type="scientific">Gemmatimonas aurantiaca (strain DSM 14586 / JCM 11422 / NBRC 100505 / T-27)</name>
    <dbReference type="NCBI Taxonomy" id="379066"/>
    <lineage>
        <taxon>Bacteria</taxon>
        <taxon>Pseudomonadati</taxon>
        <taxon>Gemmatimonadota</taxon>
        <taxon>Gemmatimonadia</taxon>
        <taxon>Gemmatimonadales</taxon>
        <taxon>Gemmatimonadaceae</taxon>
        <taxon>Gemmatimonas</taxon>
    </lineage>
</organism>
<reference key="1">
    <citation type="submission" date="2006-03" db="EMBL/GenBank/DDBJ databases">
        <title>Complete genome sequence of Gemmatimonas aurantiaca T-27 that represents a novel phylum Gemmatimonadetes.</title>
        <authorList>
            <person name="Takasaki K."/>
            <person name="Ichikawa N."/>
            <person name="Miura H."/>
            <person name="Matsushita S."/>
            <person name="Watanabe Y."/>
            <person name="Oguchi A."/>
            <person name="Ankai A."/>
            <person name="Yashiro I."/>
            <person name="Takahashi M."/>
            <person name="Terui Y."/>
            <person name="Fukui S."/>
            <person name="Yokoyama H."/>
            <person name="Tanikawa S."/>
            <person name="Hanada S."/>
            <person name="Kamagata Y."/>
            <person name="Fujita N."/>
        </authorList>
    </citation>
    <scope>NUCLEOTIDE SEQUENCE [LARGE SCALE GENOMIC DNA]</scope>
    <source>
        <strain>DSM 14586 / JCM 11422 / NBRC 100505 / T-27</strain>
    </source>
</reference>
<dbReference type="EMBL" id="AP009153">
    <property type="protein sequence ID" value="BAH38561.1"/>
    <property type="molecule type" value="Genomic_DNA"/>
</dbReference>
<dbReference type="RefSeq" id="WP_012683008.1">
    <property type="nucleotide sequence ID" value="NC_012489.1"/>
</dbReference>
<dbReference type="SMR" id="C1A8K1"/>
<dbReference type="STRING" id="379066.GAU_1519"/>
<dbReference type="KEGG" id="gau:GAU_1519"/>
<dbReference type="eggNOG" id="COG0268">
    <property type="taxonomic scope" value="Bacteria"/>
</dbReference>
<dbReference type="HOGENOM" id="CLU_160655_1_0_0"/>
<dbReference type="OrthoDB" id="9807974at2"/>
<dbReference type="Proteomes" id="UP000002209">
    <property type="component" value="Chromosome"/>
</dbReference>
<dbReference type="GO" id="GO:0005829">
    <property type="term" value="C:cytosol"/>
    <property type="evidence" value="ECO:0007669"/>
    <property type="project" value="TreeGrafter"/>
</dbReference>
<dbReference type="GO" id="GO:0015935">
    <property type="term" value="C:small ribosomal subunit"/>
    <property type="evidence" value="ECO:0007669"/>
    <property type="project" value="TreeGrafter"/>
</dbReference>
<dbReference type="GO" id="GO:0070181">
    <property type="term" value="F:small ribosomal subunit rRNA binding"/>
    <property type="evidence" value="ECO:0007669"/>
    <property type="project" value="TreeGrafter"/>
</dbReference>
<dbReference type="GO" id="GO:0003735">
    <property type="term" value="F:structural constituent of ribosome"/>
    <property type="evidence" value="ECO:0007669"/>
    <property type="project" value="InterPro"/>
</dbReference>
<dbReference type="GO" id="GO:0006412">
    <property type="term" value="P:translation"/>
    <property type="evidence" value="ECO:0007669"/>
    <property type="project" value="UniProtKB-UniRule"/>
</dbReference>
<dbReference type="Gene3D" id="1.20.58.110">
    <property type="entry name" value="Ribosomal protein S20"/>
    <property type="match status" value="1"/>
</dbReference>
<dbReference type="HAMAP" id="MF_00500">
    <property type="entry name" value="Ribosomal_bS20"/>
    <property type="match status" value="1"/>
</dbReference>
<dbReference type="InterPro" id="IPR002583">
    <property type="entry name" value="Ribosomal_bS20"/>
</dbReference>
<dbReference type="InterPro" id="IPR036510">
    <property type="entry name" value="Ribosomal_bS20_sf"/>
</dbReference>
<dbReference type="NCBIfam" id="TIGR00029">
    <property type="entry name" value="S20"/>
    <property type="match status" value="1"/>
</dbReference>
<dbReference type="PANTHER" id="PTHR33398">
    <property type="entry name" value="30S RIBOSOMAL PROTEIN S20"/>
    <property type="match status" value="1"/>
</dbReference>
<dbReference type="PANTHER" id="PTHR33398:SF1">
    <property type="entry name" value="SMALL RIBOSOMAL SUBUNIT PROTEIN BS20C"/>
    <property type="match status" value="1"/>
</dbReference>
<dbReference type="Pfam" id="PF01649">
    <property type="entry name" value="Ribosomal_S20p"/>
    <property type="match status" value="1"/>
</dbReference>
<dbReference type="SUPFAM" id="SSF46992">
    <property type="entry name" value="Ribosomal protein S20"/>
    <property type="match status" value="1"/>
</dbReference>
<evidence type="ECO:0000255" key="1">
    <source>
        <dbReference type="HAMAP-Rule" id="MF_00500"/>
    </source>
</evidence>
<evidence type="ECO:0000256" key="2">
    <source>
        <dbReference type="SAM" id="MobiDB-lite"/>
    </source>
</evidence>
<evidence type="ECO:0000305" key="3"/>
<protein>
    <recommendedName>
        <fullName evidence="1">Small ribosomal subunit protein bS20</fullName>
    </recommendedName>
    <alternativeName>
        <fullName evidence="3">30S ribosomal protein S20</fullName>
    </alternativeName>
</protein>